<protein>
    <recommendedName>
        <fullName>Protein MEI2-like 5</fullName>
        <shortName>OML5</shortName>
    </recommendedName>
    <alternativeName>
        <fullName>MEI2-like protein 5</fullName>
    </alternativeName>
</protein>
<comment type="function">
    <text evidence="1">Probable RNA-binding protein that may play a role in growth regulation.</text>
</comment>
<keyword id="KW-1185">Reference proteome</keyword>
<keyword id="KW-0677">Repeat</keyword>
<keyword id="KW-0694">RNA-binding</keyword>
<dbReference type="EMBL" id="AB244280">
    <property type="protein sequence ID" value="BAE79767.1"/>
    <property type="molecule type" value="mRNA"/>
</dbReference>
<dbReference type="EMBL" id="AP005651">
    <property type="protein sequence ID" value="BAD28947.1"/>
    <property type="molecule type" value="Genomic_DNA"/>
</dbReference>
<dbReference type="EMBL" id="AP008208">
    <property type="protein sequence ID" value="BAF08593.1"/>
    <property type="molecule type" value="Genomic_DNA"/>
</dbReference>
<dbReference type="EMBL" id="AP014958">
    <property type="protein sequence ID" value="BAS78366.1"/>
    <property type="molecule type" value="Genomic_DNA"/>
</dbReference>
<dbReference type="RefSeq" id="XP_015625467.1">
    <property type="nucleotide sequence ID" value="XM_015769981.1"/>
</dbReference>
<dbReference type="SMR" id="Q6EQX3"/>
<dbReference type="STRING" id="39947.Q6EQX3"/>
<dbReference type="PaxDb" id="39947-Q6EQX3"/>
<dbReference type="EnsemblPlants" id="Os02t0319100-01">
    <property type="protein sequence ID" value="Os02t0319100-01"/>
    <property type="gene ID" value="Os02g0319100"/>
</dbReference>
<dbReference type="Gramene" id="Os02t0319100-01">
    <property type="protein sequence ID" value="Os02t0319100-01"/>
    <property type="gene ID" value="Os02g0319100"/>
</dbReference>
<dbReference type="KEGG" id="dosa:Os02g0319100"/>
<dbReference type="eggNOG" id="KOG4660">
    <property type="taxonomic scope" value="Eukaryota"/>
</dbReference>
<dbReference type="HOGENOM" id="CLU_012447_0_0_1"/>
<dbReference type="InParanoid" id="Q6EQX3"/>
<dbReference type="OMA" id="SGYPPMK"/>
<dbReference type="OrthoDB" id="417481at2759"/>
<dbReference type="Proteomes" id="UP000000763">
    <property type="component" value="Chromosome 2"/>
</dbReference>
<dbReference type="Proteomes" id="UP000059680">
    <property type="component" value="Chromosome 2"/>
</dbReference>
<dbReference type="GO" id="GO:0003723">
    <property type="term" value="F:RNA binding"/>
    <property type="evidence" value="ECO:0000318"/>
    <property type="project" value="GO_Central"/>
</dbReference>
<dbReference type="GO" id="GO:0045836">
    <property type="term" value="P:positive regulation of meiotic nuclear division"/>
    <property type="evidence" value="ECO:0000318"/>
    <property type="project" value="GO_Central"/>
</dbReference>
<dbReference type="CDD" id="cd12524">
    <property type="entry name" value="RRM1_MEI2_like"/>
    <property type="match status" value="1"/>
</dbReference>
<dbReference type="CDD" id="cd12529">
    <property type="entry name" value="RRM2_MEI2_like"/>
    <property type="match status" value="1"/>
</dbReference>
<dbReference type="CDD" id="cd12531">
    <property type="entry name" value="RRM3_MEI2_like"/>
    <property type="match status" value="1"/>
</dbReference>
<dbReference type="FunFam" id="3.30.70.330:FF:000063">
    <property type="entry name" value="MEI2-like protein 5 isoform 2"/>
    <property type="match status" value="1"/>
</dbReference>
<dbReference type="FunFam" id="3.30.70.330:FF:000101">
    <property type="entry name" value="Protein MEI2-like 1"/>
    <property type="match status" value="1"/>
</dbReference>
<dbReference type="Gene3D" id="3.30.70.330">
    <property type="match status" value="2"/>
</dbReference>
<dbReference type="InterPro" id="IPR034453">
    <property type="entry name" value="MEI2-like_RRM1"/>
</dbReference>
<dbReference type="InterPro" id="IPR034454">
    <property type="entry name" value="MEI2-like_RRM3"/>
</dbReference>
<dbReference type="InterPro" id="IPR007201">
    <property type="entry name" value="Mei2-like_Rrm_C"/>
</dbReference>
<dbReference type="InterPro" id="IPR012677">
    <property type="entry name" value="Nucleotide-bd_a/b_plait_sf"/>
</dbReference>
<dbReference type="InterPro" id="IPR035979">
    <property type="entry name" value="RBD_domain_sf"/>
</dbReference>
<dbReference type="InterPro" id="IPR000504">
    <property type="entry name" value="RRM_dom"/>
</dbReference>
<dbReference type="PANTHER" id="PTHR23189">
    <property type="entry name" value="RNA RECOGNITION MOTIF-CONTAINING"/>
    <property type="match status" value="1"/>
</dbReference>
<dbReference type="Pfam" id="PF00076">
    <property type="entry name" value="RRM_1"/>
    <property type="match status" value="2"/>
</dbReference>
<dbReference type="Pfam" id="PF04059">
    <property type="entry name" value="RRM_2"/>
    <property type="match status" value="1"/>
</dbReference>
<dbReference type="SMART" id="SM00360">
    <property type="entry name" value="RRM"/>
    <property type="match status" value="3"/>
</dbReference>
<dbReference type="SUPFAM" id="SSF54928">
    <property type="entry name" value="RNA-binding domain, RBD"/>
    <property type="match status" value="2"/>
</dbReference>
<dbReference type="PROSITE" id="PS50102">
    <property type="entry name" value="RRM"/>
    <property type="match status" value="2"/>
</dbReference>
<reference key="1">
    <citation type="journal article" date="2006" name="Plant Cell">
        <title>PLASTOCHRON2 regulates leaf initiation and maturation in rice.</title>
        <authorList>
            <person name="Kawakatsu T."/>
            <person name="Itoh J."/>
            <person name="Miyoshi K."/>
            <person name="Kurata N."/>
            <person name="Alvarez N."/>
            <person name="Veit B."/>
            <person name="Nagato Y."/>
        </authorList>
    </citation>
    <scope>NUCLEOTIDE SEQUENCE [MRNA]</scope>
    <source>
        <strain>cv. Nipponbare</strain>
    </source>
</reference>
<reference key="2">
    <citation type="journal article" date="2005" name="Nature">
        <title>The map-based sequence of the rice genome.</title>
        <authorList>
            <consortium name="International rice genome sequencing project (IRGSP)"/>
        </authorList>
    </citation>
    <scope>NUCLEOTIDE SEQUENCE [LARGE SCALE GENOMIC DNA]</scope>
    <source>
        <strain>cv. Nipponbare</strain>
    </source>
</reference>
<reference key="3">
    <citation type="journal article" date="2008" name="Nucleic Acids Res.">
        <title>The rice annotation project database (RAP-DB): 2008 update.</title>
        <authorList>
            <consortium name="The rice annotation project (RAP)"/>
        </authorList>
    </citation>
    <scope>GENOME REANNOTATION</scope>
    <source>
        <strain>cv. Nipponbare</strain>
    </source>
</reference>
<reference key="4">
    <citation type="journal article" date="2013" name="Rice">
        <title>Improvement of the Oryza sativa Nipponbare reference genome using next generation sequence and optical map data.</title>
        <authorList>
            <person name="Kawahara Y."/>
            <person name="de la Bastide M."/>
            <person name="Hamilton J.P."/>
            <person name="Kanamori H."/>
            <person name="McCombie W.R."/>
            <person name="Ouyang S."/>
            <person name="Schwartz D.C."/>
            <person name="Tanaka T."/>
            <person name="Wu J."/>
            <person name="Zhou S."/>
            <person name="Childs K.L."/>
            <person name="Davidson R.M."/>
            <person name="Lin H."/>
            <person name="Quesada-Ocampo L."/>
            <person name="Vaillancourt B."/>
            <person name="Sakai H."/>
            <person name="Lee S.S."/>
            <person name="Kim J."/>
            <person name="Numa H."/>
            <person name="Itoh T."/>
            <person name="Buell C.R."/>
            <person name="Matsumoto T."/>
        </authorList>
    </citation>
    <scope>GENOME REANNOTATION</scope>
    <source>
        <strain>cv. Nipponbare</strain>
    </source>
</reference>
<reference key="5">
    <citation type="journal article" date="2004" name="Plant Mol. Biol.">
        <title>Diversification of genes encoding mei2 -like RNA binding proteins in plants.</title>
        <authorList>
            <person name="Anderson G.H."/>
            <person name="Alvarez N.D."/>
            <person name="Gilman C."/>
            <person name="Jeffares D.C."/>
            <person name="Trainor V.C."/>
            <person name="Hanson M.R."/>
            <person name="Veit B."/>
        </authorList>
    </citation>
    <scope>GENE FAMILY</scope>
</reference>
<feature type="chain" id="PRO_0000409349" description="Protein MEI2-like 5">
    <location>
        <begin position="1"/>
        <end position="811"/>
    </location>
</feature>
<feature type="domain" description="RRM 1" evidence="2">
    <location>
        <begin position="193"/>
        <end position="266"/>
    </location>
</feature>
<feature type="domain" description="RRM 2" evidence="2">
    <location>
        <begin position="278"/>
        <end position="351"/>
    </location>
</feature>
<feature type="region of interest" description="Disordered" evidence="3">
    <location>
        <begin position="371"/>
        <end position="397"/>
    </location>
</feature>
<feature type="compositionally biased region" description="Polar residues" evidence="3">
    <location>
        <begin position="374"/>
        <end position="397"/>
    </location>
</feature>
<evidence type="ECO:0000250" key="1"/>
<evidence type="ECO:0000255" key="2">
    <source>
        <dbReference type="PROSITE-ProRule" id="PRU00176"/>
    </source>
</evidence>
<evidence type="ECO:0000256" key="3">
    <source>
        <dbReference type="SAM" id="MobiDB-lite"/>
    </source>
</evidence>
<proteinExistence type="evidence at transcript level"/>
<sequence length="811" mass="90295">MEQREDHTKSSEPAFIPSKRTHQMRNIWAWGGPSSTTVNGSSDAVLFSSSLPSVLQFGKLPGKEREYNAQPKDDMFPMMKQPGTNARVADPMDDVAQHLIGNLLPDDEELLAGVIEDFDHVKLRTQVEESEEYDVFRNSGGMELDIDPLESITFGTAKASLVNGTGSSTNQYSIQNGAGTVTGEHPYGEHPSRTLFVRNINSNVEDSELRSLFEPFGDIRSMYTATKHRGFVMISYYDIRHARNAKTALQSKPLRRRKLDIHYSIPKENPSDKDMNQGTLVIFNLEPAVSNEELLQIFGAFGEVREIRETPHKRHHRFIEFYDVRAAESALRSLNKSDIAGKRVKLEPSRPGGARRSFIQHFNHEFEQDETKHNSFQIGSPSANSPPSLWSQLGSPTDENKLNALNETAFNGGMSPLGSNHLSGFSSGYPPMKSPVGKSSYWNNRADNIFHGSPTLHNSHSFPEHHGGIISASPLVSSAASSASTASGFTALTGTSFLWGNNNNLRDHGQPSSIQSQALSNSLFPNNQPQRQSNLYQNLRGSFGASEHFSQFNVGSAPSVFPFESNFGYFSDSPDTSYMRQGKFGGTGPTRVSGSLMTNFGAYPRINVASMQNGSVGFEGLLDRGRNQTVGNSGCQEDSRVQYQLDLEKIIAGKDTRTTLMIKNIPNKYTSNMLLEVIDETHEGTYDFFYLPIDFKNKCNVGYAFINMASPGYIVSFFKAFAGRKWEKFNSEKVVSLAYARIQGKAALVNHFQNSSLMNEDKRCRPMLFDPKHTENNNQILLNGIFISMAQQDATQERHDLPENPREDNFS</sequence>
<accession>Q6EQX3</accession>
<accession>A0A0P0VI75</accession>
<name>OML5_ORYSJ</name>
<organism>
    <name type="scientific">Oryza sativa subsp. japonica</name>
    <name type="common">Rice</name>
    <dbReference type="NCBI Taxonomy" id="39947"/>
    <lineage>
        <taxon>Eukaryota</taxon>
        <taxon>Viridiplantae</taxon>
        <taxon>Streptophyta</taxon>
        <taxon>Embryophyta</taxon>
        <taxon>Tracheophyta</taxon>
        <taxon>Spermatophyta</taxon>
        <taxon>Magnoliopsida</taxon>
        <taxon>Liliopsida</taxon>
        <taxon>Poales</taxon>
        <taxon>Poaceae</taxon>
        <taxon>BOP clade</taxon>
        <taxon>Oryzoideae</taxon>
        <taxon>Oryzeae</taxon>
        <taxon>Oryzinae</taxon>
        <taxon>Oryza</taxon>
        <taxon>Oryza sativa</taxon>
    </lineage>
</organism>
<gene>
    <name type="primary">ML5</name>
    <name type="ordered locus">Os02g0319100</name>
    <name type="ordered locus">LOC_Os02g21430</name>
    <name type="ORF">OSJNBa0086N11.15</name>
</gene>